<sequence length="266" mass="28949">MKLSLSPPPYADAPVVVLISGLGGSGSYWLPQLAVLEQEYQVVCYDQRGTGNNPDTLAEDYSITQMAAELHQALVAAGIEHYAVVGHALGALVGMQLALDHPASVTVLVCVNGWLRINAHTRRCFQVRERLLYSGGAQAWVEAQPLFLYPADWMAARAPRLEAEDALALAHFQGKNNLLRRLNALKRADFSHHADRIRCPVQIICASDDLLVPSACSSELHAALPDSQKMVMRYGGHACNVTDPETFNALLLNGLASLLHHREAAL</sequence>
<dbReference type="EC" id="3.5.1.-" evidence="1"/>
<dbReference type="EMBL" id="AE005174">
    <property type="protein sequence ID" value="AAG55625.1"/>
    <property type="molecule type" value="Genomic_DNA"/>
</dbReference>
<dbReference type="EMBL" id="BA000007">
    <property type="protein sequence ID" value="BAB34678.1"/>
    <property type="molecule type" value="Genomic_DNA"/>
</dbReference>
<dbReference type="PIR" id="E85645">
    <property type="entry name" value="E85645"/>
</dbReference>
<dbReference type="PIR" id="G90785">
    <property type="entry name" value="G90785"/>
</dbReference>
<dbReference type="RefSeq" id="NP_309282.1">
    <property type="nucleotide sequence ID" value="NC_002695.1"/>
</dbReference>
<dbReference type="RefSeq" id="WP_001301780.1">
    <property type="nucleotide sequence ID" value="NZ_VOAI01000026.1"/>
</dbReference>
<dbReference type="SMR" id="Q8XAU7"/>
<dbReference type="STRING" id="155864.Z1508"/>
<dbReference type="ESTHER" id="ecoli-rutD">
    <property type="family name" value="RutD"/>
</dbReference>
<dbReference type="GeneID" id="912509"/>
<dbReference type="KEGG" id="ece:Z1508"/>
<dbReference type="KEGG" id="ecs:ECs_1255"/>
<dbReference type="PATRIC" id="fig|386585.9.peg.1358"/>
<dbReference type="eggNOG" id="COG2021">
    <property type="taxonomic scope" value="Bacteria"/>
</dbReference>
<dbReference type="HOGENOM" id="CLU_020336_50_1_6"/>
<dbReference type="OMA" id="WSSPNPH"/>
<dbReference type="Proteomes" id="UP000000558">
    <property type="component" value="Chromosome"/>
</dbReference>
<dbReference type="Proteomes" id="UP000002519">
    <property type="component" value="Chromosome"/>
</dbReference>
<dbReference type="GO" id="GO:0016811">
    <property type="term" value="F:hydrolase activity, acting on carbon-nitrogen (but not peptide) bonds, in linear amides"/>
    <property type="evidence" value="ECO:0007669"/>
    <property type="project" value="InterPro"/>
</dbReference>
<dbReference type="GO" id="GO:0019740">
    <property type="term" value="P:nitrogen utilization"/>
    <property type="evidence" value="ECO:0007669"/>
    <property type="project" value="UniProtKB-UniRule"/>
</dbReference>
<dbReference type="GO" id="GO:0006212">
    <property type="term" value="P:uracil catabolic process"/>
    <property type="evidence" value="ECO:0007669"/>
    <property type="project" value="UniProtKB-UniRule"/>
</dbReference>
<dbReference type="FunFam" id="3.40.50.1820:FF:000052">
    <property type="entry name" value="Putative aminoacrylate hydrolase RutD"/>
    <property type="match status" value="1"/>
</dbReference>
<dbReference type="Gene3D" id="3.40.50.1820">
    <property type="entry name" value="alpha/beta hydrolase"/>
    <property type="match status" value="1"/>
</dbReference>
<dbReference type="HAMAP" id="MF_00832">
    <property type="entry name" value="RutD"/>
    <property type="match status" value="1"/>
</dbReference>
<dbReference type="InterPro" id="IPR000073">
    <property type="entry name" value="AB_hydrolase_1"/>
</dbReference>
<dbReference type="InterPro" id="IPR029058">
    <property type="entry name" value="AB_hydrolase_fold"/>
</dbReference>
<dbReference type="InterPro" id="IPR050266">
    <property type="entry name" value="AB_hydrolase_sf"/>
</dbReference>
<dbReference type="InterPro" id="IPR019913">
    <property type="entry name" value="Pyrimidine_utilisation_RutD"/>
</dbReference>
<dbReference type="NCBIfam" id="TIGR03611">
    <property type="entry name" value="RutD"/>
    <property type="match status" value="1"/>
</dbReference>
<dbReference type="PANTHER" id="PTHR43798">
    <property type="entry name" value="MONOACYLGLYCEROL LIPASE"/>
    <property type="match status" value="1"/>
</dbReference>
<dbReference type="Pfam" id="PF00561">
    <property type="entry name" value="Abhydrolase_1"/>
    <property type="match status" value="1"/>
</dbReference>
<dbReference type="SUPFAM" id="SSF53474">
    <property type="entry name" value="alpha/beta-Hydrolases"/>
    <property type="match status" value="1"/>
</dbReference>
<protein>
    <recommendedName>
        <fullName evidence="1">Putative carbamate hydrolase RutD</fullName>
        <ecNumber evidence="1">3.5.1.-</ecNumber>
    </recommendedName>
    <alternativeName>
        <fullName evidence="1">Aminohydrolase</fullName>
    </alternativeName>
</protein>
<evidence type="ECO:0000255" key="1">
    <source>
        <dbReference type="HAMAP-Rule" id="MF_00832"/>
    </source>
</evidence>
<evidence type="ECO:0000305" key="2"/>
<name>RUTD_ECO57</name>
<proteinExistence type="inferred from homology"/>
<reference key="1">
    <citation type="journal article" date="2001" name="Nature">
        <title>Genome sequence of enterohaemorrhagic Escherichia coli O157:H7.</title>
        <authorList>
            <person name="Perna N.T."/>
            <person name="Plunkett G. III"/>
            <person name="Burland V."/>
            <person name="Mau B."/>
            <person name="Glasner J.D."/>
            <person name="Rose D.J."/>
            <person name="Mayhew G.F."/>
            <person name="Evans P.S."/>
            <person name="Gregor J."/>
            <person name="Kirkpatrick H.A."/>
            <person name="Posfai G."/>
            <person name="Hackett J."/>
            <person name="Klink S."/>
            <person name="Boutin A."/>
            <person name="Shao Y."/>
            <person name="Miller L."/>
            <person name="Grotbeck E.J."/>
            <person name="Davis N.W."/>
            <person name="Lim A."/>
            <person name="Dimalanta E.T."/>
            <person name="Potamousis K."/>
            <person name="Apodaca J."/>
            <person name="Anantharaman T.S."/>
            <person name="Lin J."/>
            <person name="Yen G."/>
            <person name="Schwartz D.C."/>
            <person name="Welch R.A."/>
            <person name="Blattner F.R."/>
        </authorList>
    </citation>
    <scope>NUCLEOTIDE SEQUENCE [LARGE SCALE GENOMIC DNA]</scope>
    <source>
        <strain>O157:H7 / EDL933 / ATCC 700927 / EHEC</strain>
    </source>
</reference>
<reference key="2">
    <citation type="journal article" date="2001" name="DNA Res.">
        <title>Complete genome sequence of enterohemorrhagic Escherichia coli O157:H7 and genomic comparison with a laboratory strain K-12.</title>
        <authorList>
            <person name="Hayashi T."/>
            <person name="Makino K."/>
            <person name="Ohnishi M."/>
            <person name="Kurokawa K."/>
            <person name="Ishii K."/>
            <person name="Yokoyama K."/>
            <person name="Han C.-G."/>
            <person name="Ohtsubo E."/>
            <person name="Nakayama K."/>
            <person name="Murata T."/>
            <person name="Tanaka M."/>
            <person name="Tobe T."/>
            <person name="Iida T."/>
            <person name="Takami H."/>
            <person name="Honda T."/>
            <person name="Sasakawa C."/>
            <person name="Ogasawara N."/>
            <person name="Yasunaga T."/>
            <person name="Kuhara S."/>
            <person name="Shiba T."/>
            <person name="Hattori M."/>
            <person name="Shinagawa H."/>
        </authorList>
    </citation>
    <scope>NUCLEOTIDE SEQUENCE [LARGE SCALE GENOMIC DNA]</scope>
    <source>
        <strain>O157:H7 / Sakai / RIMD 0509952 / EHEC</strain>
    </source>
</reference>
<organism>
    <name type="scientific">Escherichia coli O157:H7</name>
    <dbReference type="NCBI Taxonomy" id="83334"/>
    <lineage>
        <taxon>Bacteria</taxon>
        <taxon>Pseudomonadati</taxon>
        <taxon>Pseudomonadota</taxon>
        <taxon>Gammaproteobacteria</taxon>
        <taxon>Enterobacterales</taxon>
        <taxon>Enterobacteriaceae</taxon>
        <taxon>Escherichia</taxon>
    </lineage>
</organism>
<accession>Q8XAU7</accession>
<keyword id="KW-0378">Hydrolase</keyword>
<keyword id="KW-1185">Reference proteome</keyword>
<feature type="chain" id="PRO_0000168801" description="Putative carbamate hydrolase RutD">
    <location>
        <begin position="1"/>
        <end position="266"/>
    </location>
</feature>
<gene>
    <name evidence="1" type="primary">rutD</name>
    <name type="ordered locus">Z1508</name>
    <name type="ordered locus">ECs1255</name>
</gene>
<comment type="function">
    <text evidence="1">Involved in pyrimidine catabolism. May facilitate the hydrolysis of carbamate, a reaction that can also occur spontaneously.</text>
</comment>
<comment type="catalytic activity">
    <reaction evidence="1">
        <text>carbamate + 2 H(+) = NH4(+) + CO2</text>
        <dbReference type="Rhea" id="RHEA:15649"/>
        <dbReference type="ChEBI" id="CHEBI:13941"/>
        <dbReference type="ChEBI" id="CHEBI:15378"/>
        <dbReference type="ChEBI" id="CHEBI:16526"/>
        <dbReference type="ChEBI" id="CHEBI:28938"/>
    </reaction>
</comment>
<comment type="induction">
    <text evidence="2">Up-regulated by the nitrogen regulatory protein C (NtrC also called GlnG) and repressed by RutR.</text>
</comment>
<comment type="similarity">
    <text evidence="1 2">Belongs to the AB hydrolase superfamily. Hydrolase RutD family.</text>
</comment>